<protein>
    <recommendedName>
        <fullName evidence="1">UDP-N-acetylmuramoylalanine--D-glutamate ligase</fullName>
        <ecNumber evidence="1">6.3.2.9</ecNumber>
    </recommendedName>
    <alternativeName>
        <fullName evidence="1">D-glutamic acid-adding enzyme</fullName>
    </alternativeName>
    <alternativeName>
        <fullName evidence="1">UDP-N-acetylmuramoyl-L-alanyl-D-glutamate synthetase</fullName>
    </alternativeName>
</protein>
<proteinExistence type="inferred from homology"/>
<evidence type="ECO:0000255" key="1">
    <source>
        <dbReference type="HAMAP-Rule" id="MF_00639"/>
    </source>
</evidence>
<keyword id="KW-0067">ATP-binding</keyword>
<keyword id="KW-0131">Cell cycle</keyword>
<keyword id="KW-0132">Cell division</keyword>
<keyword id="KW-0133">Cell shape</keyword>
<keyword id="KW-0961">Cell wall biogenesis/degradation</keyword>
<keyword id="KW-0963">Cytoplasm</keyword>
<keyword id="KW-0436">Ligase</keyword>
<keyword id="KW-0547">Nucleotide-binding</keyword>
<keyword id="KW-0573">Peptidoglycan synthesis</keyword>
<keyword id="KW-1185">Reference proteome</keyword>
<organism>
    <name type="scientific">Limosilactobacillus reuteri (strain DSM 20016)</name>
    <name type="common">Lactobacillus reuteri</name>
    <dbReference type="NCBI Taxonomy" id="557436"/>
    <lineage>
        <taxon>Bacteria</taxon>
        <taxon>Bacillati</taxon>
        <taxon>Bacillota</taxon>
        <taxon>Bacilli</taxon>
        <taxon>Lactobacillales</taxon>
        <taxon>Lactobacillaceae</taxon>
        <taxon>Limosilactobacillus</taxon>
    </lineage>
</organism>
<gene>
    <name evidence="1" type="primary">murD</name>
    <name type="ordered locus">Lreu_0589</name>
</gene>
<comment type="function">
    <text evidence="1">Cell wall formation. Catalyzes the addition of glutamate to the nucleotide precursor UDP-N-acetylmuramoyl-L-alanine (UMA).</text>
</comment>
<comment type="catalytic activity">
    <reaction evidence="1">
        <text>UDP-N-acetyl-alpha-D-muramoyl-L-alanine + D-glutamate + ATP = UDP-N-acetyl-alpha-D-muramoyl-L-alanyl-D-glutamate + ADP + phosphate + H(+)</text>
        <dbReference type="Rhea" id="RHEA:16429"/>
        <dbReference type="ChEBI" id="CHEBI:15378"/>
        <dbReference type="ChEBI" id="CHEBI:29986"/>
        <dbReference type="ChEBI" id="CHEBI:30616"/>
        <dbReference type="ChEBI" id="CHEBI:43474"/>
        <dbReference type="ChEBI" id="CHEBI:83898"/>
        <dbReference type="ChEBI" id="CHEBI:83900"/>
        <dbReference type="ChEBI" id="CHEBI:456216"/>
        <dbReference type="EC" id="6.3.2.9"/>
    </reaction>
</comment>
<comment type="pathway">
    <text evidence="1">Cell wall biogenesis; peptidoglycan biosynthesis.</text>
</comment>
<comment type="subcellular location">
    <subcellularLocation>
        <location evidence="1">Cytoplasm</location>
    </subcellularLocation>
</comment>
<comment type="similarity">
    <text evidence="1">Belongs to the MurCDEF family.</text>
</comment>
<dbReference type="EC" id="6.3.2.9" evidence="1"/>
<dbReference type="EMBL" id="CP000705">
    <property type="protein sequence ID" value="ABQ82856.1"/>
    <property type="molecule type" value="Genomic_DNA"/>
</dbReference>
<dbReference type="RefSeq" id="WP_003668324.1">
    <property type="nucleotide sequence ID" value="NC_009513.1"/>
</dbReference>
<dbReference type="SMR" id="A5VJ32"/>
<dbReference type="STRING" id="557436.Lreu_0589"/>
<dbReference type="GeneID" id="77190731"/>
<dbReference type="KEGG" id="lre:Lreu_0589"/>
<dbReference type="PATRIC" id="fig|557436.17.peg.661"/>
<dbReference type="eggNOG" id="COG0771">
    <property type="taxonomic scope" value="Bacteria"/>
</dbReference>
<dbReference type="HOGENOM" id="CLU_032540_0_1_9"/>
<dbReference type="UniPathway" id="UPA00219"/>
<dbReference type="Proteomes" id="UP000001991">
    <property type="component" value="Chromosome"/>
</dbReference>
<dbReference type="GO" id="GO:0005737">
    <property type="term" value="C:cytoplasm"/>
    <property type="evidence" value="ECO:0007669"/>
    <property type="project" value="UniProtKB-SubCell"/>
</dbReference>
<dbReference type="GO" id="GO:0005524">
    <property type="term" value="F:ATP binding"/>
    <property type="evidence" value="ECO:0007669"/>
    <property type="project" value="UniProtKB-UniRule"/>
</dbReference>
<dbReference type="GO" id="GO:0008764">
    <property type="term" value="F:UDP-N-acetylmuramoylalanine-D-glutamate ligase activity"/>
    <property type="evidence" value="ECO:0007669"/>
    <property type="project" value="UniProtKB-UniRule"/>
</dbReference>
<dbReference type="GO" id="GO:0051301">
    <property type="term" value="P:cell division"/>
    <property type="evidence" value="ECO:0007669"/>
    <property type="project" value="UniProtKB-KW"/>
</dbReference>
<dbReference type="GO" id="GO:0071555">
    <property type="term" value="P:cell wall organization"/>
    <property type="evidence" value="ECO:0007669"/>
    <property type="project" value="UniProtKB-KW"/>
</dbReference>
<dbReference type="GO" id="GO:0009252">
    <property type="term" value="P:peptidoglycan biosynthetic process"/>
    <property type="evidence" value="ECO:0007669"/>
    <property type="project" value="UniProtKB-UniRule"/>
</dbReference>
<dbReference type="GO" id="GO:0008360">
    <property type="term" value="P:regulation of cell shape"/>
    <property type="evidence" value="ECO:0007669"/>
    <property type="project" value="UniProtKB-KW"/>
</dbReference>
<dbReference type="CDD" id="cd02440">
    <property type="entry name" value="AdoMet_MTases"/>
    <property type="match status" value="1"/>
</dbReference>
<dbReference type="Gene3D" id="3.90.190.20">
    <property type="entry name" value="Mur ligase, C-terminal domain"/>
    <property type="match status" value="1"/>
</dbReference>
<dbReference type="Gene3D" id="3.40.1190.10">
    <property type="entry name" value="Mur-like, catalytic domain"/>
    <property type="match status" value="1"/>
</dbReference>
<dbReference type="Gene3D" id="3.40.50.720">
    <property type="entry name" value="NAD(P)-binding Rossmann-like Domain"/>
    <property type="match status" value="1"/>
</dbReference>
<dbReference type="HAMAP" id="MF_00639">
    <property type="entry name" value="MurD"/>
    <property type="match status" value="1"/>
</dbReference>
<dbReference type="InterPro" id="IPR007698">
    <property type="entry name" value="AlaDH/PNT_NAD(H)-bd"/>
</dbReference>
<dbReference type="InterPro" id="IPR036565">
    <property type="entry name" value="Mur-like_cat_sf"/>
</dbReference>
<dbReference type="InterPro" id="IPR004101">
    <property type="entry name" value="Mur_ligase_C"/>
</dbReference>
<dbReference type="InterPro" id="IPR036615">
    <property type="entry name" value="Mur_ligase_C_dom_sf"/>
</dbReference>
<dbReference type="InterPro" id="IPR013221">
    <property type="entry name" value="Mur_ligase_cen"/>
</dbReference>
<dbReference type="InterPro" id="IPR005762">
    <property type="entry name" value="MurD"/>
</dbReference>
<dbReference type="NCBIfam" id="TIGR01087">
    <property type="entry name" value="murD"/>
    <property type="match status" value="1"/>
</dbReference>
<dbReference type="PANTHER" id="PTHR43692">
    <property type="entry name" value="UDP-N-ACETYLMURAMOYLALANINE--D-GLUTAMATE LIGASE"/>
    <property type="match status" value="1"/>
</dbReference>
<dbReference type="PANTHER" id="PTHR43692:SF1">
    <property type="entry name" value="UDP-N-ACETYLMURAMOYLALANINE--D-GLUTAMATE LIGASE"/>
    <property type="match status" value="1"/>
</dbReference>
<dbReference type="Pfam" id="PF01262">
    <property type="entry name" value="AlaDh_PNT_C"/>
    <property type="match status" value="1"/>
</dbReference>
<dbReference type="Pfam" id="PF02875">
    <property type="entry name" value="Mur_ligase_C"/>
    <property type="match status" value="1"/>
</dbReference>
<dbReference type="Pfam" id="PF08245">
    <property type="entry name" value="Mur_ligase_M"/>
    <property type="match status" value="1"/>
</dbReference>
<dbReference type="Pfam" id="PF21799">
    <property type="entry name" value="MurD-like_N"/>
    <property type="match status" value="1"/>
</dbReference>
<dbReference type="SUPFAM" id="SSF51984">
    <property type="entry name" value="MurCD N-terminal domain"/>
    <property type="match status" value="1"/>
</dbReference>
<dbReference type="SUPFAM" id="SSF53623">
    <property type="entry name" value="MurD-like peptide ligases, catalytic domain"/>
    <property type="match status" value="1"/>
</dbReference>
<dbReference type="SUPFAM" id="SSF53244">
    <property type="entry name" value="MurD-like peptide ligases, peptide-binding domain"/>
    <property type="match status" value="1"/>
</dbReference>
<sequence length="456" mass="50332">MKKIDEYQGKKVLVMGFGISGINAAHLLVKLGANVTANDKATPKNNDIVDDLEADGIKVITGDNPISLANEGFDVVVKNPGIPYDNPLVAAFVKQGTPIITEAELGWQIFDGHLVSVTGSNGKTTTTTLTQLMIAENAKHQVKYAGNIGISFSKIAEDLGPDDTLVTELSSFQLLGAPTIHPHIAIITNIFSNHLDYHKTRENYINAKLNITRNQTKDDFLVINWDRDEWQKIAQRSQATIVPFSRLNKSHEGSYVEDGMIYWRGQEVMPTKDIRLIGPQNVENALAAIAAAKLSGVTNDAIKKVLTTFSGVRHRLQYVMEYQERLFYNDSKSTDIEATEVALQGFDRPVILLAGGLDRGYTFERLVPYFKKHVKAMIVFGECKDKMKDAGNQAGVPVVESENAITAVPEAWKLSEPGDVILLSPANASWDQFPSFEVRGDKFIEAVEELTGKKEQ</sequence>
<name>MURD_LIMRD</name>
<reference key="1">
    <citation type="journal article" date="2011" name="PLoS Genet.">
        <title>The evolution of host specialization in the vertebrate gut symbiont Lactobacillus reuteri.</title>
        <authorList>
            <person name="Frese S.A."/>
            <person name="Benson A.K."/>
            <person name="Tannock G.W."/>
            <person name="Loach D.M."/>
            <person name="Kim J."/>
            <person name="Zhang M."/>
            <person name="Oh P.L."/>
            <person name="Heng N.C."/>
            <person name="Patil P.B."/>
            <person name="Juge N."/>
            <person name="Mackenzie D.A."/>
            <person name="Pearson B.M."/>
            <person name="Lapidus A."/>
            <person name="Dalin E."/>
            <person name="Tice H."/>
            <person name="Goltsman E."/>
            <person name="Land M."/>
            <person name="Hauser L."/>
            <person name="Ivanova N."/>
            <person name="Kyrpides N.C."/>
            <person name="Walter J."/>
        </authorList>
    </citation>
    <scope>NUCLEOTIDE SEQUENCE [LARGE SCALE GENOMIC DNA]</scope>
    <source>
        <strain>DSM 20016</strain>
    </source>
</reference>
<feature type="chain" id="PRO_1000061452" description="UDP-N-acetylmuramoylalanine--D-glutamate ligase">
    <location>
        <begin position="1"/>
        <end position="456"/>
    </location>
</feature>
<feature type="binding site" evidence="1">
    <location>
        <begin position="119"/>
        <end position="125"/>
    </location>
    <ligand>
        <name>ATP</name>
        <dbReference type="ChEBI" id="CHEBI:30616"/>
    </ligand>
</feature>
<accession>A5VJ32</accession>